<keyword id="KW-0997">Cell inner membrane</keyword>
<keyword id="KW-1003">Cell membrane</keyword>
<keyword id="KW-0472">Membrane</keyword>
<keyword id="KW-1185">Reference proteome</keyword>
<keyword id="KW-0812">Transmembrane</keyword>
<keyword id="KW-1133">Transmembrane helix</keyword>
<evidence type="ECO:0000255" key="1">
    <source>
        <dbReference type="HAMAP-Rule" id="MF_01101"/>
    </source>
</evidence>
<reference key="1">
    <citation type="journal article" date="2003" name="Nat. Biotechnol.">
        <title>The genome sequence of the entomopathogenic bacterium Photorhabdus luminescens.</title>
        <authorList>
            <person name="Duchaud E."/>
            <person name="Rusniok C."/>
            <person name="Frangeul L."/>
            <person name="Buchrieser C."/>
            <person name="Givaudan A."/>
            <person name="Taourit S."/>
            <person name="Bocs S."/>
            <person name="Boursaux-Eude C."/>
            <person name="Chandler M."/>
            <person name="Charles J.-F."/>
            <person name="Dassa E."/>
            <person name="Derose R."/>
            <person name="Derzelle S."/>
            <person name="Freyssinet G."/>
            <person name="Gaudriault S."/>
            <person name="Medigue C."/>
            <person name="Lanois A."/>
            <person name="Powell K."/>
            <person name="Siguier P."/>
            <person name="Vincent R."/>
            <person name="Wingate V."/>
            <person name="Zouine M."/>
            <person name="Glaser P."/>
            <person name="Boemare N."/>
            <person name="Danchin A."/>
            <person name="Kunst F."/>
        </authorList>
    </citation>
    <scope>NUCLEOTIDE SEQUENCE [LARGE SCALE GENOMIC DNA]</scope>
    <source>
        <strain>DSM 15139 / CIP 105565 / TT01</strain>
    </source>
</reference>
<dbReference type="EMBL" id="BX571869">
    <property type="protein sequence ID" value="CAE15468.1"/>
    <property type="molecule type" value="Genomic_DNA"/>
</dbReference>
<dbReference type="RefSeq" id="WP_011147311.1">
    <property type="nucleotide sequence ID" value="NC_005126.1"/>
</dbReference>
<dbReference type="STRING" id="243265.plu3094"/>
<dbReference type="GeneID" id="48849355"/>
<dbReference type="KEGG" id="plu:plu3094"/>
<dbReference type="eggNOG" id="COG3092">
    <property type="taxonomic scope" value="Bacteria"/>
</dbReference>
<dbReference type="HOGENOM" id="CLU_128746_0_0_6"/>
<dbReference type="OrthoDB" id="7066670at2"/>
<dbReference type="Proteomes" id="UP000002514">
    <property type="component" value="Chromosome"/>
</dbReference>
<dbReference type="GO" id="GO:0005886">
    <property type="term" value="C:plasma membrane"/>
    <property type="evidence" value="ECO:0007669"/>
    <property type="project" value="UniProtKB-SubCell"/>
</dbReference>
<dbReference type="HAMAP" id="MF_01101">
    <property type="entry name" value="UPF0208"/>
    <property type="match status" value="1"/>
</dbReference>
<dbReference type="InterPro" id="IPR007334">
    <property type="entry name" value="UPF0208"/>
</dbReference>
<dbReference type="NCBIfam" id="NF002493">
    <property type="entry name" value="PRK01816.1"/>
    <property type="match status" value="1"/>
</dbReference>
<dbReference type="Pfam" id="PF04217">
    <property type="entry name" value="DUF412"/>
    <property type="match status" value="1"/>
</dbReference>
<comment type="subcellular location">
    <subcellularLocation>
        <location evidence="1">Cell inner membrane</location>
        <topology evidence="1">Multi-pass membrane protein</topology>
    </subcellularLocation>
</comment>
<comment type="similarity">
    <text evidence="1">Belongs to the UPF0208 family.</text>
</comment>
<accession>Q7N2I2</accession>
<sequence length="151" mass="17031">MSAIPPTSNGWLRKMQLGQQYMKTWPIEKQLAPMFPENRIIKATRFGIRFMPPLAIFTLTWQIALGGQLGPAVATALFACSLPMQGLWWLGKRASTPLPAALLKWFHEIRDKFAAAGITMAPVQQTPTYQSLAELLKRAFKQLDRSFLDDI</sequence>
<name>Y3094_PHOLL</name>
<organism>
    <name type="scientific">Photorhabdus laumondii subsp. laumondii (strain DSM 15139 / CIP 105565 / TT01)</name>
    <name type="common">Photorhabdus luminescens subsp. laumondii</name>
    <dbReference type="NCBI Taxonomy" id="243265"/>
    <lineage>
        <taxon>Bacteria</taxon>
        <taxon>Pseudomonadati</taxon>
        <taxon>Pseudomonadota</taxon>
        <taxon>Gammaproteobacteria</taxon>
        <taxon>Enterobacterales</taxon>
        <taxon>Morganellaceae</taxon>
        <taxon>Photorhabdus</taxon>
    </lineage>
</organism>
<protein>
    <recommendedName>
        <fullName evidence="1">UPF0208 membrane protein plu3094</fullName>
    </recommendedName>
</protein>
<feature type="chain" id="PRO_0000080816" description="UPF0208 membrane protein plu3094">
    <location>
        <begin position="1"/>
        <end position="151"/>
    </location>
</feature>
<feature type="transmembrane region" description="Helical" evidence="1">
    <location>
        <begin position="46"/>
        <end position="65"/>
    </location>
</feature>
<feature type="transmembrane region" description="Helical" evidence="1">
    <location>
        <begin position="69"/>
        <end position="91"/>
    </location>
</feature>
<proteinExistence type="inferred from homology"/>
<gene>
    <name type="ordered locus">plu3094</name>
</gene>